<protein>
    <recommendedName>
        <fullName evidence="1">Small ribosomal subunit protein uS2</fullName>
    </recommendedName>
    <alternativeName>
        <fullName evidence="3">30S ribosomal protein S2</fullName>
    </alternativeName>
</protein>
<name>RS2_TRIV2</name>
<keyword id="KW-0687">Ribonucleoprotein</keyword>
<keyword id="KW-0689">Ribosomal protein</keyword>
<feature type="chain" id="PRO_1000003886" description="Small ribosomal subunit protein uS2">
    <location>
        <begin position="1"/>
        <end position="265"/>
    </location>
</feature>
<feature type="region of interest" description="Disordered" evidence="2">
    <location>
        <begin position="231"/>
        <end position="265"/>
    </location>
</feature>
<accession>Q3MBF3</accession>
<gene>
    <name evidence="1" type="primary">rpsB</name>
    <name evidence="1" type="synonym">rps2</name>
    <name type="ordered locus">Ava_2061</name>
</gene>
<proteinExistence type="inferred from homology"/>
<reference key="1">
    <citation type="journal article" date="2014" name="Stand. Genomic Sci.">
        <title>Complete genome sequence of Anabaena variabilis ATCC 29413.</title>
        <authorList>
            <person name="Thiel T."/>
            <person name="Pratte B.S."/>
            <person name="Zhong J."/>
            <person name="Goodwin L."/>
            <person name="Copeland A."/>
            <person name="Lucas S."/>
            <person name="Han C."/>
            <person name="Pitluck S."/>
            <person name="Land M.L."/>
            <person name="Kyrpides N.C."/>
            <person name="Woyke T."/>
        </authorList>
    </citation>
    <scope>NUCLEOTIDE SEQUENCE [LARGE SCALE GENOMIC DNA]</scope>
    <source>
        <strain>ATCC 29413 / PCC 7937</strain>
    </source>
</reference>
<comment type="similarity">
    <text evidence="1">Belongs to the universal ribosomal protein uS2 family.</text>
</comment>
<organism>
    <name type="scientific">Trichormus variabilis (strain ATCC 29413 / PCC 7937)</name>
    <name type="common">Anabaena variabilis</name>
    <dbReference type="NCBI Taxonomy" id="240292"/>
    <lineage>
        <taxon>Bacteria</taxon>
        <taxon>Bacillati</taxon>
        <taxon>Cyanobacteriota</taxon>
        <taxon>Cyanophyceae</taxon>
        <taxon>Nostocales</taxon>
        <taxon>Nostocaceae</taxon>
        <taxon>Trichormus</taxon>
    </lineage>
</organism>
<evidence type="ECO:0000255" key="1">
    <source>
        <dbReference type="HAMAP-Rule" id="MF_00291"/>
    </source>
</evidence>
<evidence type="ECO:0000256" key="2">
    <source>
        <dbReference type="SAM" id="MobiDB-lite"/>
    </source>
</evidence>
<evidence type="ECO:0000305" key="3"/>
<sequence>MPVVSLAQMMESGVHFGHQTRRWNPKMSPYIYTSRNGVHIIDLVQTAHLMDEAYNYMRSQAEQGKKFLFVGTKRQAAGIIAQEAARCGSHYINQRWLGGMLTNWATIKTRVDRLKDLERREESGALDLLPKKEASMLRRELAKLQKYLGGIKTMRKVPDVVVIVDQRREYNAVQECQKLSIPIVSMLDTNCDPDVVDIPIPANDDAIRSIKLIVGKLADAIYEGRHGQLDVEEEYEDYEGAEDDYEYDETEYTDSVIPDDEEEAE</sequence>
<dbReference type="EMBL" id="CP000117">
    <property type="protein sequence ID" value="ABA21683.1"/>
    <property type="molecule type" value="Genomic_DNA"/>
</dbReference>
<dbReference type="SMR" id="Q3MBF3"/>
<dbReference type="STRING" id="240292.Ava_2061"/>
<dbReference type="KEGG" id="ava:Ava_2061"/>
<dbReference type="eggNOG" id="COG0052">
    <property type="taxonomic scope" value="Bacteria"/>
</dbReference>
<dbReference type="HOGENOM" id="CLU_040318_1_2_3"/>
<dbReference type="Proteomes" id="UP000002533">
    <property type="component" value="Chromosome"/>
</dbReference>
<dbReference type="GO" id="GO:0022627">
    <property type="term" value="C:cytosolic small ribosomal subunit"/>
    <property type="evidence" value="ECO:0007669"/>
    <property type="project" value="TreeGrafter"/>
</dbReference>
<dbReference type="GO" id="GO:0003735">
    <property type="term" value="F:structural constituent of ribosome"/>
    <property type="evidence" value="ECO:0007669"/>
    <property type="project" value="InterPro"/>
</dbReference>
<dbReference type="GO" id="GO:0006412">
    <property type="term" value="P:translation"/>
    <property type="evidence" value="ECO:0007669"/>
    <property type="project" value="UniProtKB-UniRule"/>
</dbReference>
<dbReference type="CDD" id="cd01425">
    <property type="entry name" value="RPS2"/>
    <property type="match status" value="1"/>
</dbReference>
<dbReference type="FunFam" id="1.10.287.610:FF:000001">
    <property type="entry name" value="30S ribosomal protein S2"/>
    <property type="match status" value="1"/>
</dbReference>
<dbReference type="Gene3D" id="3.40.50.10490">
    <property type="entry name" value="Glucose-6-phosphate isomerase like protein, domain 1"/>
    <property type="match status" value="1"/>
</dbReference>
<dbReference type="Gene3D" id="1.10.287.610">
    <property type="entry name" value="Helix hairpin bin"/>
    <property type="match status" value="1"/>
</dbReference>
<dbReference type="HAMAP" id="MF_00291_B">
    <property type="entry name" value="Ribosomal_uS2_B"/>
    <property type="match status" value="1"/>
</dbReference>
<dbReference type="InterPro" id="IPR001865">
    <property type="entry name" value="Ribosomal_uS2"/>
</dbReference>
<dbReference type="InterPro" id="IPR005706">
    <property type="entry name" value="Ribosomal_uS2_bac/mit/plastid"/>
</dbReference>
<dbReference type="InterPro" id="IPR018130">
    <property type="entry name" value="Ribosomal_uS2_CS"/>
</dbReference>
<dbReference type="InterPro" id="IPR023591">
    <property type="entry name" value="Ribosomal_uS2_flav_dom_sf"/>
</dbReference>
<dbReference type="NCBIfam" id="TIGR01011">
    <property type="entry name" value="rpsB_bact"/>
    <property type="match status" value="1"/>
</dbReference>
<dbReference type="PANTHER" id="PTHR12534">
    <property type="entry name" value="30S RIBOSOMAL PROTEIN S2 PROKARYOTIC AND ORGANELLAR"/>
    <property type="match status" value="1"/>
</dbReference>
<dbReference type="PANTHER" id="PTHR12534:SF0">
    <property type="entry name" value="SMALL RIBOSOMAL SUBUNIT PROTEIN US2M"/>
    <property type="match status" value="1"/>
</dbReference>
<dbReference type="Pfam" id="PF00318">
    <property type="entry name" value="Ribosomal_S2"/>
    <property type="match status" value="1"/>
</dbReference>
<dbReference type="PRINTS" id="PR00395">
    <property type="entry name" value="RIBOSOMALS2"/>
</dbReference>
<dbReference type="SUPFAM" id="SSF52313">
    <property type="entry name" value="Ribosomal protein S2"/>
    <property type="match status" value="1"/>
</dbReference>
<dbReference type="PROSITE" id="PS00962">
    <property type="entry name" value="RIBOSOMAL_S2_1"/>
    <property type="match status" value="1"/>
</dbReference>